<organism>
    <name type="scientific">Dictyostelium discoideum</name>
    <name type="common">Social amoeba</name>
    <dbReference type="NCBI Taxonomy" id="44689"/>
    <lineage>
        <taxon>Eukaryota</taxon>
        <taxon>Amoebozoa</taxon>
        <taxon>Evosea</taxon>
        <taxon>Eumycetozoa</taxon>
        <taxon>Dictyostelia</taxon>
        <taxon>Dictyosteliales</taxon>
        <taxon>Dictyosteliaceae</taxon>
        <taxon>Dictyostelium</taxon>
    </lineage>
</organism>
<comment type="subcellular location">
    <subcellularLocation>
        <location evidence="1">Nucleus</location>
    </subcellularLocation>
</comment>
<comment type="similarity">
    <text evidence="5">Belongs to the RRM MRD1 family.</text>
</comment>
<name>MRD1_DICDI</name>
<keyword id="KW-0175">Coiled coil</keyword>
<keyword id="KW-0539">Nucleus</keyword>
<keyword id="KW-1185">Reference proteome</keyword>
<keyword id="KW-0677">Repeat</keyword>
<keyword id="KW-0694">RNA-binding</keyword>
<reference key="1">
    <citation type="journal article" date="2005" name="Nature">
        <title>The genome of the social amoeba Dictyostelium discoideum.</title>
        <authorList>
            <person name="Eichinger L."/>
            <person name="Pachebat J.A."/>
            <person name="Gloeckner G."/>
            <person name="Rajandream M.A."/>
            <person name="Sucgang R."/>
            <person name="Berriman M."/>
            <person name="Song J."/>
            <person name="Olsen R."/>
            <person name="Szafranski K."/>
            <person name="Xu Q."/>
            <person name="Tunggal B."/>
            <person name="Kummerfeld S."/>
            <person name="Madera M."/>
            <person name="Konfortov B.A."/>
            <person name="Rivero F."/>
            <person name="Bankier A.T."/>
            <person name="Lehmann R."/>
            <person name="Hamlin N."/>
            <person name="Davies R."/>
            <person name="Gaudet P."/>
            <person name="Fey P."/>
            <person name="Pilcher K."/>
            <person name="Chen G."/>
            <person name="Saunders D."/>
            <person name="Sodergren E.J."/>
            <person name="Davis P."/>
            <person name="Kerhornou A."/>
            <person name="Nie X."/>
            <person name="Hall N."/>
            <person name="Anjard C."/>
            <person name="Hemphill L."/>
            <person name="Bason N."/>
            <person name="Farbrother P."/>
            <person name="Desany B."/>
            <person name="Just E."/>
            <person name="Morio T."/>
            <person name="Rost R."/>
            <person name="Churcher C.M."/>
            <person name="Cooper J."/>
            <person name="Haydock S."/>
            <person name="van Driessche N."/>
            <person name="Cronin A."/>
            <person name="Goodhead I."/>
            <person name="Muzny D.M."/>
            <person name="Mourier T."/>
            <person name="Pain A."/>
            <person name="Lu M."/>
            <person name="Harper D."/>
            <person name="Lindsay R."/>
            <person name="Hauser H."/>
            <person name="James K.D."/>
            <person name="Quiles M."/>
            <person name="Madan Babu M."/>
            <person name="Saito T."/>
            <person name="Buchrieser C."/>
            <person name="Wardroper A."/>
            <person name="Felder M."/>
            <person name="Thangavelu M."/>
            <person name="Johnson D."/>
            <person name="Knights A."/>
            <person name="Loulseged H."/>
            <person name="Mungall K.L."/>
            <person name="Oliver K."/>
            <person name="Price C."/>
            <person name="Quail M.A."/>
            <person name="Urushihara H."/>
            <person name="Hernandez J."/>
            <person name="Rabbinowitsch E."/>
            <person name="Steffen D."/>
            <person name="Sanders M."/>
            <person name="Ma J."/>
            <person name="Kohara Y."/>
            <person name="Sharp S."/>
            <person name="Simmonds M.N."/>
            <person name="Spiegler S."/>
            <person name="Tivey A."/>
            <person name="Sugano S."/>
            <person name="White B."/>
            <person name="Walker D."/>
            <person name="Woodward J.R."/>
            <person name="Winckler T."/>
            <person name="Tanaka Y."/>
            <person name="Shaulsky G."/>
            <person name="Schleicher M."/>
            <person name="Weinstock G.M."/>
            <person name="Rosenthal A."/>
            <person name="Cox E.C."/>
            <person name="Chisholm R.L."/>
            <person name="Gibbs R.A."/>
            <person name="Loomis W.F."/>
            <person name="Platzer M."/>
            <person name="Kay R.R."/>
            <person name="Williams J.G."/>
            <person name="Dear P.H."/>
            <person name="Noegel A.A."/>
            <person name="Barrell B.G."/>
            <person name="Kuspa A."/>
        </authorList>
    </citation>
    <scope>NUCLEOTIDE SEQUENCE [LARGE SCALE GENOMIC DNA]</scope>
    <source>
        <strain>AX4</strain>
    </source>
</reference>
<proteinExistence type="inferred from homology"/>
<feature type="chain" id="PRO_0000327807" description="Multiple RNA-binding domain-containing protein 1">
    <location>
        <begin position="1"/>
        <end position="895"/>
    </location>
</feature>
<feature type="domain" description="RRM 1" evidence="3">
    <location>
        <begin position="4"/>
        <end position="79"/>
    </location>
</feature>
<feature type="domain" description="RRM 2" evidence="3">
    <location>
        <begin position="361"/>
        <end position="439"/>
    </location>
</feature>
<feature type="domain" description="RRM 3" evidence="3">
    <location>
        <begin position="553"/>
        <end position="625"/>
    </location>
</feature>
<feature type="domain" description="RRM 4" evidence="3">
    <location>
        <begin position="678"/>
        <end position="761"/>
    </location>
</feature>
<feature type="domain" description="RRM 5" evidence="3">
    <location>
        <begin position="795"/>
        <end position="872"/>
    </location>
</feature>
<feature type="region of interest" description="Disordered" evidence="4">
    <location>
        <begin position="84"/>
        <end position="136"/>
    </location>
</feature>
<feature type="region of interest" description="Disordered" evidence="4">
    <location>
        <begin position="172"/>
        <end position="200"/>
    </location>
</feature>
<feature type="region of interest" description="Disordered" evidence="4">
    <location>
        <begin position="223"/>
        <end position="340"/>
    </location>
</feature>
<feature type="region of interest" description="Disordered" evidence="4">
    <location>
        <begin position="442"/>
        <end position="479"/>
    </location>
</feature>
<feature type="region of interest" description="Disordered" evidence="4">
    <location>
        <begin position="634"/>
        <end position="670"/>
    </location>
</feature>
<feature type="region of interest" description="Disordered" evidence="4">
    <location>
        <begin position="769"/>
        <end position="796"/>
    </location>
</feature>
<feature type="coiled-coil region" evidence="2">
    <location>
        <begin position="96"/>
        <end position="134"/>
    </location>
</feature>
<feature type="coiled-coil region" evidence="2">
    <location>
        <begin position="284"/>
        <end position="331"/>
    </location>
</feature>
<feature type="compositionally biased region" description="Basic and acidic residues" evidence="4">
    <location>
        <begin position="101"/>
        <end position="113"/>
    </location>
</feature>
<feature type="compositionally biased region" description="Acidic residues" evidence="4">
    <location>
        <begin position="179"/>
        <end position="191"/>
    </location>
</feature>
<feature type="compositionally biased region" description="Basic and acidic residues" evidence="4">
    <location>
        <begin position="241"/>
        <end position="251"/>
    </location>
</feature>
<feature type="compositionally biased region" description="Basic and acidic residues" evidence="4">
    <location>
        <begin position="265"/>
        <end position="278"/>
    </location>
</feature>
<feature type="compositionally biased region" description="Basic and acidic residues" evidence="4">
    <location>
        <begin position="296"/>
        <end position="316"/>
    </location>
</feature>
<feature type="compositionally biased region" description="Basic residues" evidence="4">
    <location>
        <begin position="317"/>
        <end position="326"/>
    </location>
</feature>
<feature type="compositionally biased region" description="Low complexity" evidence="4">
    <location>
        <begin position="451"/>
        <end position="462"/>
    </location>
</feature>
<feature type="compositionally biased region" description="Basic and acidic residues" evidence="4">
    <location>
        <begin position="635"/>
        <end position="658"/>
    </location>
</feature>
<feature type="compositionally biased region" description="Low complexity" evidence="4">
    <location>
        <begin position="659"/>
        <end position="670"/>
    </location>
</feature>
<feature type="compositionally biased region" description="Polar residues" evidence="4">
    <location>
        <begin position="778"/>
        <end position="794"/>
    </location>
</feature>
<accession>Q54PB2</accession>
<evidence type="ECO:0000250" key="1"/>
<evidence type="ECO:0000255" key="2"/>
<evidence type="ECO:0000255" key="3">
    <source>
        <dbReference type="PROSITE-ProRule" id="PRU00176"/>
    </source>
</evidence>
<evidence type="ECO:0000256" key="4">
    <source>
        <dbReference type="SAM" id="MobiDB-lite"/>
    </source>
</evidence>
<evidence type="ECO:0000305" key="5"/>
<dbReference type="EMBL" id="AAFI02000070">
    <property type="protein sequence ID" value="EAL65101.1"/>
    <property type="molecule type" value="Genomic_DNA"/>
</dbReference>
<dbReference type="RefSeq" id="XP_638463.1">
    <property type="nucleotide sequence ID" value="XM_633371.1"/>
</dbReference>
<dbReference type="SMR" id="Q54PB2"/>
<dbReference type="FunCoup" id="Q54PB2">
    <property type="interactions" value="1293"/>
</dbReference>
<dbReference type="STRING" id="44689.Q54PB2"/>
<dbReference type="PaxDb" id="44689-DDB0233347"/>
<dbReference type="EnsemblProtists" id="EAL65101">
    <property type="protein sequence ID" value="EAL65101"/>
    <property type="gene ID" value="DDB_G0284663"/>
</dbReference>
<dbReference type="GeneID" id="8624714"/>
<dbReference type="KEGG" id="ddi:DDB_G0284663"/>
<dbReference type="dictyBase" id="DDB_G0284663">
    <property type="gene designation" value="mrd1"/>
</dbReference>
<dbReference type="VEuPathDB" id="AmoebaDB:DDB_G0284663"/>
<dbReference type="eggNOG" id="KOG0110">
    <property type="taxonomic scope" value="Eukaryota"/>
</dbReference>
<dbReference type="HOGENOM" id="CLU_008479_0_0_1"/>
<dbReference type="InParanoid" id="Q54PB2"/>
<dbReference type="OMA" id="FNNTCIQ"/>
<dbReference type="PhylomeDB" id="Q54PB2"/>
<dbReference type="PRO" id="PR:Q54PB2"/>
<dbReference type="Proteomes" id="UP000002195">
    <property type="component" value="Chromosome 4"/>
</dbReference>
<dbReference type="GO" id="GO:0005730">
    <property type="term" value="C:nucleolus"/>
    <property type="evidence" value="ECO:0000250"/>
    <property type="project" value="dictyBase"/>
</dbReference>
<dbReference type="GO" id="GO:0005634">
    <property type="term" value="C:nucleus"/>
    <property type="evidence" value="ECO:0000250"/>
    <property type="project" value="UniProtKB"/>
</dbReference>
<dbReference type="GO" id="GO:0003729">
    <property type="term" value="F:mRNA binding"/>
    <property type="evidence" value="ECO:0000318"/>
    <property type="project" value="GO_Central"/>
</dbReference>
<dbReference type="GO" id="GO:0019843">
    <property type="term" value="F:rRNA binding"/>
    <property type="evidence" value="ECO:0000250"/>
    <property type="project" value="dictyBase"/>
</dbReference>
<dbReference type="GO" id="GO:0006364">
    <property type="term" value="P:rRNA processing"/>
    <property type="evidence" value="ECO:0000250"/>
    <property type="project" value="dictyBase"/>
</dbReference>
<dbReference type="CDD" id="cd12565">
    <property type="entry name" value="RRM1_MRD1"/>
    <property type="match status" value="1"/>
</dbReference>
<dbReference type="CDD" id="cd12566">
    <property type="entry name" value="RRM2_MRD1"/>
    <property type="match status" value="1"/>
</dbReference>
<dbReference type="CDD" id="cd12317">
    <property type="entry name" value="RRM4_RBM19_RRM3_MRD1"/>
    <property type="match status" value="1"/>
</dbReference>
<dbReference type="CDD" id="cd12320">
    <property type="entry name" value="RRM6_RBM19_RRM5_MRD1"/>
    <property type="match status" value="1"/>
</dbReference>
<dbReference type="FunFam" id="3.30.70.330:FF:002241">
    <property type="match status" value="1"/>
</dbReference>
<dbReference type="FunFam" id="3.30.70.330:FF:002244">
    <property type="match status" value="1"/>
</dbReference>
<dbReference type="Gene3D" id="3.30.70.330">
    <property type="match status" value="5"/>
</dbReference>
<dbReference type="InterPro" id="IPR012677">
    <property type="entry name" value="Nucleotide-bd_a/b_plait_sf"/>
</dbReference>
<dbReference type="InterPro" id="IPR035979">
    <property type="entry name" value="RBD_domain_sf"/>
</dbReference>
<dbReference type="InterPro" id="IPR050441">
    <property type="entry name" value="RBM"/>
</dbReference>
<dbReference type="InterPro" id="IPR000504">
    <property type="entry name" value="RRM_dom"/>
</dbReference>
<dbReference type="InterPro" id="IPR003954">
    <property type="entry name" value="RRM_dom_euk"/>
</dbReference>
<dbReference type="PANTHER" id="PTHR48034">
    <property type="entry name" value="TRANSFORMER-2 SEX-DETERMINING PROTEIN-RELATED"/>
    <property type="match status" value="1"/>
</dbReference>
<dbReference type="Pfam" id="PF00076">
    <property type="entry name" value="RRM_1"/>
    <property type="match status" value="5"/>
</dbReference>
<dbReference type="SMART" id="SM00360">
    <property type="entry name" value="RRM"/>
    <property type="match status" value="5"/>
</dbReference>
<dbReference type="SMART" id="SM00361">
    <property type="entry name" value="RRM_1"/>
    <property type="match status" value="2"/>
</dbReference>
<dbReference type="SUPFAM" id="SSF54928">
    <property type="entry name" value="RNA-binding domain, RBD"/>
    <property type="match status" value="5"/>
</dbReference>
<dbReference type="PROSITE" id="PS50102">
    <property type="entry name" value="RRM"/>
    <property type="match status" value="5"/>
</dbReference>
<protein>
    <recommendedName>
        <fullName>Multiple RNA-binding domain-containing protein 1</fullName>
    </recommendedName>
    <alternativeName>
        <fullName>RNA-binding motif protein 19 homolog</fullName>
    </alternativeName>
    <alternativeName>
        <fullName>RNA-binding protein 19 homolog</fullName>
    </alternativeName>
</protein>
<sequence length="895" mass="102101">MSNTRICVKQLPKHLTDKRFKEHFEKFGTVTDAKIIKKDGKSRLFGFIGFSTEQSAKNALSLNGTFIDTSKIVVETATVASETTENRPWSKYSIGSSSNKRLTEMEKEKEKKELKRKQDKLEQQSNKKQKKSHTNSLLDAELENDPEYQEFLNLVAPQANRKVWENDDKEIGKINRGEEEGEEGEENDNQVEDGKLPFSGKKKIELDHGKNKDLLVFEDADASDEEDLYEDMPTAPKKQNKKDDVDSIINEKKKKHDSSVSDLDWLSKFRSNNDEIIEKNQSIVYRDEEESEEEDVNNKENKKDKMKIDDNKENKKEKKKDKKKNKKDNDNDGDDDESKIKPIKYFEHDYTKEDEDVGESGRIFVRNLSYSTKEEDLEKVFSKFGKISEIHIPIDYDSKKSKGIAFILYLIPENAVQALNDMDGKVFQGRLIHVLPGKAAPAKQFSENKDNNNNGAEGGSSSFKAEKEQKQKTTSGSTHNWNALFMRSDAIVSSLAERYKMTQGQLLDPNQMDLAVRMTLMETHVINETKKFLEDQGVIIQDIGNKGSKRSNTVLLVKNIPFKTQEHELHELFSKFGELSRVVLSPARTIALIEYIHPNEAKVGFKNLAYSKFHHVPLYLEWAPEGVFKLPAPPKEIKKSEKSEKSSDSSNDKKEVESTTKTAATTTTTKKGTDNNTQFVYIKNLNWKTTNETLVGKFKSLKDYVNVNIATKANPKNPSERLPCGFGFIEFSSKQGAYECIKKLNGSSIDGYEISLKLSDKNETNVQEINKRRELPENSKQSIKSNGGQPNKPSSKIIIKNLPFESTIKEIRKLFTAYGEIQSVRIPKKPNGGHRGFGFVEFLTEEEAKNAMEALGNSHFYGRHLVLQYAEQDKNIDELREKANLDYEKIKNSTF</sequence>
<gene>
    <name type="primary">mrd1</name>
    <name type="synonym">rbm19</name>
    <name type="ORF">DDB_G0284663</name>
</gene>